<dbReference type="EMBL" id="AJ719918">
    <property type="protein sequence ID" value="CAG31577.1"/>
    <property type="molecule type" value="mRNA"/>
</dbReference>
<dbReference type="RefSeq" id="NP_001007845.1">
    <property type="nucleotide sequence ID" value="NM_001007844.1"/>
</dbReference>
<dbReference type="SMR" id="Q5ZL16"/>
<dbReference type="FunCoup" id="Q5ZL16">
    <property type="interactions" value="2841"/>
</dbReference>
<dbReference type="STRING" id="9031.ENSGALP00000002372"/>
<dbReference type="PaxDb" id="9031-ENSGALP00000002372"/>
<dbReference type="GeneID" id="417339"/>
<dbReference type="KEGG" id="gga:417339"/>
<dbReference type="CTD" id="56270"/>
<dbReference type="VEuPathDB" id="HostDB:geneid_417339"/>
<dbReference type="eggNOG" id="KOG2111">
    <property type="taxonomic scope" value="Eukaryota"/>
</dbReference>
<dbReference type="HOGENOM" id="CLU_025895_2_2_1"/>
<dbReference type="InParanoid" id="Q5ZL16"/>
<dbReference type="OrthoDB" id="1667587at2759"/>
<dbReference type="PhylomeDB" id="Q5ZL16"/>
<dbReference type="TreeFam" id="TF314859"/>
<dbReference type="Reactome" id="R-GGA-1632852">
    <property type="pathway name" value="Macroautophagy"/>
</dbReference>
<dbReference type="PRO" id="PR:Q5ZL16"/>
<dbReference type="Proteomes" id="UP000000539">
    <property type="component" value="Chromosome 18"/>
</dbReference>
<dbReference type="Bgee" id="ENSGALG00000001563">
    <property type="expression patterns" value="Expressed in colon and 12 other cell types or tissues"/>
</dbReference>
<dbReference type="GO" id="GO:0005829">
    <property type="term" value="C:cytosol"/>
    <property type="evidence" value="ECO:0000318"/>
    <property type="project" value="GO_Central"/>
</dbReference>
<dbReference type="GO" id="GO:0005764">
    <property type="term" value="C:lysosome"/>
    <property type="evidence" value="ECO:0000250"/>
    <property type="project" value="UniProtKB"/>
</dbReference>
<dbReference type="GO" id="GO:0000407">
    <property type="term" value="C:phagophore assembly site"/>
    <property type="evidence" value="ECO:0000250"/>
    <property type="project" value="UniProtKB"/>
</dbReference>
<dbReference type="GO" id="GO:0034045">
    <property type="term" value="C:phagophore assembly site membrane"/>
    <property type="evidence" value="ECO:0000318"/>
    <property type="project" value="GO_Central"/>
</dbReference>
<dbReference type="GO" id="GO:0080025">
    <property type="term" value="F:phosphatidylinositol-3,5-bisphosphate binding"/>
    <property type="evidence" value="ECO:0000250"/>
    <property type="project" value="UniProtKB"/>
</dbReference>
<dbReference type="GO" id="GO:0032266">
    <property type="term" value="F:phosphatidylinositol-3-phosphate binding"/>
    <property type="evidence" value="ECO:0000250"/>
    <property type="project" value="UniProtKB"/>
</dbReference>
<dbReference type="GO" id="GO:0030674">
    <property type="term" value="F:protein-macromolecule adaptor activity"/>
    <property type="evidence" value="ECO:0000318"/>
    <property type="project" value="GO_Central"/>
</dbReference>
<dbReference type="GO" id="GO:0000045">
    <property type="term" value="P:autophagosome assembly"/>
    <property type="evidence" value="ECO:0000250"/>
    <property type="project" value="UniProtKB"/>
</dbReference>
<dbReference type="GO" id="GO:0000422">
    <property type="term" value="P:autophagy of mitochondrion"/>
    <property type="evidence" value="ECO:0000318"/>
    <property type="project" value="GO_Central"/>
</dbReference>
<dbReference type="GO" id="GO:0009267">
    <property type="term" value="P:cellular response to starvation"/>
    <property type="evidence" value="ECO:0000250"/>
    <property type="project" value="UniProtKB"/>
</dbReference>
<dbReference type="GO" id="GO:0061723">
    <property type="term" value="P:glycophagy"/>
    <property type="evidence" value="ECO:0000318"/>
    <property type="project" value="GO_Central"/>
</dbReference>
<dbReference type="GO" id="GO:0044804">
    <property type="term" value="P:nucleophagy"/>
    <property type="evidence" value="ECO:0000318"/>
    <property type="project" value="GO_Central"/>
</dbReference>
<dbReference type="GO" id="GO:0000425">
    <property type="term" value="P:pexophagy"/>
    <property type="evidence" value="ECO:0000318"/>
    <property type="project" value="GO_Central"/>
</dbReference>
<dbReference type="GO" id="GO:0034497">
    <property type="term" value="P:protein localization to phagophore assembly site"/>
    <property type="evidence" value="ECO:0000318"/>
    <property type="project" value="GO_Central"/>
</dbReference>
<dbReference type="FunFam" id="2.130.10.10:FF:000083">
    <property type="entry name" value="WD repeat domain phosphoinositide-interacting protein 3"/>
    <property type="match status" value="1"/>
</dbReference>
<dbReference type="Gene3D" id="2.130.10.10">
    <property type="entry name" value="YVTN repeat-like/Quinoprotein amine dehydrogenase"/>
    <property type="match status" value="1"/>
</dbReference>
<dbReference type="InterPro" id="IPR048720">
    <property type="entry name" value="PROPPIN"/>
</dbReference>
<dbReference type="InterPro" id="IPR015943">
    <property type="entry name" value="WD40/YVTN_repeat-like_dom_sf"/>
</dbReference>
<dbReference type="InterPro" id="IPR036322">
    <property type="entry name" value="WD40_repeat_dom_sf"/>
</dbReference>
<dbReference type="InterPro" id="IPR001680">
    <property type="entry name" value="WD40_rpt"/>
</dbReference>
<dbReference type="PANTHER" id="PTHR11227">
    <property type="entry name" value="WD-REPEAT PROTEIN INTERACTING WITH PHOSPHOINOSIDES WIPI -RELATED"/>
    <property type="match status" value="1"/>
</dbReference>
<dbReference type="Pfam" id="PF21032">
    <property type="entry name" value="PROPPIN"/>
    <property type="match status" value="1"/>
</dbReference>
<dbReference type="SMART" id="SM00320">
    <property type="entry name" value="WD40"/>
    <property type="match status" value="2"/>
</dbReference>
<dbReference type="SUPFAM" id="SSF50978">
    <property type="entry name" value="WD40 repeat-like"/>
    <property type="match status" value="1"/>
</dbReference>
<feature type="chain" id="PRO_0000051448" description="WD repeat domain phosphoinositide-interacting protein 3">
    <location>
        <begin position="1"/>
        <end position="344"/>
    </location>
</feature>
<feature type="repeat" description="WD 1">
    <location>
        <begin position="183"/>
        <end position="223"/>
    </location>
</feature>
<feature type="repeat" description="WD 2">
    <location>
        <begin position="228"/>
        <end position="267"/>
    </location>
</feature>
<feature type="short sequence motif" description="L/FRRG motif" evidence="2">
    <location>
        <begin position="224"/>
        <end position="227"/>
    </location>
</feature>
<name>WIPI3_CHICK</name>
<evidence type="ECO:0000250" key="1">
    <source>
        <dbReference type="UniProtKB" id="Q5MNZ6"/>
    </source>
</evidence>
<evidence type="ECO:0000250" key="2">
    <source>
        <dbReference type="UniProtKB" id="Q9Y4P8"/>
    </source>
</evidence>
<evidence type="ECO:0000305" key="3"/>
<protein>
    <recommendedName>
        <fullName>WD repeat domain phosphoinositide-interacting protein 3</fullName>
        <shortName>WIPI-3</shortName>
    </recommendedName>
    <alternativeName>
        <fullName>WD repeat-containing protein 45B</fullName>
    </alternativeName>
</protein>
<gene>
    <name type="primary">WDR45B</name>
    <name type="synonym">WIPI3</name>
    <name type="ORF">RCJMB04_8d21</name>
</gene>
<accession>Q5ZL16</accession>
<comment type="function">
    <text evidence="1">Component of the autophagy machinery that controls the major intracellular degradation process by which cytoplasmic materials are packaged into autophagosomes and delivered to lysosomes for degradation. Binds phosphatidylinositol 3-phosphate (PtdIns3P), and other phosphoinositides including PtdIns(3,5)P2, forming on membranes of the endoplasmic reticulum upon activation of the upstream ULK1 and PI3 kinases and is recruited at phagophore assembly sites where it regulates the elongation of nascent phagophores downstream of WIPI2.</text>
</comment>
<comment type="subcellular location">
    <subcellularLocation>
        <location evidence="1">Preautophagosomal structure</location>
    </subcellularLocation>
    <subcellularLocation>
        <location evidence="1">Lysosome</location>
    </subcellularLocation>
</comment>
<comment type="domain">
    <text evidence="2">The L/FRRG motif is required for recruitment to PtdIns3P.</text>
</comment>
<comment type="similarity">
    <text evidence="3">Belongs to the WD repeat PROPPIN family.</text>
</comment>
<sequence length="344" mass="38090">MNLLPANPHGNGLLYAGFNQDHGCFACGMENGFRVYNADPLKEKEKQEFPEGGVGHVEMLFRCNYLALVGGGKKPKYPPNKVMIWDDLKKKTVIEIEFSTEVKAVKLRRDRIVVVLDSMIKVFTFTHNPHQLHVFETCYNPKGLCVLCPNSNNSLLAFPGTHTGHVQIVDLANTEKPPVDIPAHEGILSCIALNLQGTRIATASEKGTLIRIFDTSSGHLIQELRRGSQAANIYCINFNQDASLICVSSDHGTVHIFAAEDPKRNKQSSLASASFLPKYFSSKWSFSKFQVPSGSPCICAFGTEPNAVLAICADGSYYKFLFNQKGECSRDVYAQFLEMTDDKL</sequence>
<reference key="1">
    <citation type="journal article" date="2005" name="Genome Biol.">
        <title>Full-length cDNAs from chicken bursal lymphocytes to facilitate gene function analysis.</title>
        <authorList>
            <person name="Caldwell R.B."/>
            <person name="Kierzek A.M."/>
            <person name="Arakawa H."/>
            <person name="Bezzubov Y."/>
            <person name="Zaim J."/>
            <person name="Fiedler P."/>
            <person name="Kutter S."/>
            <person name="Blagodatski A."/>
            <person name="Kostovska D."/>
            <person name="Koter M."/>
            <person name="Plachy J."/>
            <person name="Carninci P."/>
            <person name="Hayashizaki Y."/>
            <person name="Buerstedde J.-M."/>
        </authorList>
    </citation>
    <scope>NUCLEOTIDE SEQUENCE [LARGE SCALE MRNA]</scope>
    <source>
        <strain>CB</strain>
        <tissue>Bursa of Fabricius</tissue>
    </source>
</reference>
<organism>
    <name type="scientific">Gallus gallus</name>
    <name type="common">Chicken</name>
    <dbReference type="NCBI Taxonomy" id="9031"/>
    <lineage>
        <taxon>Eukaryota</taxon>
        <taxon>Metazoa</taxon>
        <taxon>Chordata</taxon>
        <taxon>Craniata</taxon>
        <taxon>Vertebrata</taxon>
        <taxon>Euteleostomi</taxon>
        <taxon>Archelosauria</taxon>
        <taxon>Archosauria</taxon>
        <taxon>Dinosauria</taxon>
        <taxon>Saurischia</taxon>
        <taxon>Theropoda</taxon>
        <taxon>Coelurosauria</taxon>
        <taxon>Aves</taxon>
        <taxon>Neognathae</taxon>
        <taxon>Galloanserae</taxon>
        <taxon>Galliformes</taxon>
        <taxon>Phasianidae</taxon>
        <taxon>Phasianinae</taxon>
        <taxon>Gallus</taxon>
    </lineage>
</organism>
<keyword id="KW-0072">Autophagy</keyword>
<keyword id="KW-0446">Lipid-binding</keyword>
<keyword id="KW-0458">Lysosome</keyword>
<keyword id="KW-1185">Reference proteome</keyword>
<keyword id="KW-0677">Repeat</keyword>
<keyword id="KW-0853">WD repeat</keyword>
<proteinExistence type="evidence at transcript level"/>